<comment type="function">
    <text evidence="1">Catalyzes the ATP-dependent 2-thiolation of cytidine in position 32 of tRNA, to form 2-thiocytidine (s(2)C32). The sulfur atoms are provided by the cysteine/cysteine desulfurase (IscS) system.</text>
</comment>
<comment type="catalytic activity">
    <reaction evidence="1">
        <text>cytidine(32) in tRNA + S-sulfanyl-L-cysteinyl-[cysteine desulfurase] + AH2 + ATP = 2-thiocytidine(32) in tRNA + L-cysteinyl-[cysteine desulfurase] + A + AMP + diphosphate + H(+)</text>
        <dbReference type="Rhea" id="RHEA:57048"/>
        <dbReference type="Rhea" id="RHEA-COMP:10288"/>
        <dbReference type="Rhea" id="RHEA-COMP:12157"/>
        <dbReference type="Rhea" id="RHEA-COMP:12158"/>
        <dbReference type="Rhea" id="RHEA-COMP:14821"/>
        <dbReference type="ChEBI" id="CHEBI:13193"/>
        <dbReference type="ChEBI" id="CHEBI:15378"/>
        <dbReference type="ChEBI" id="CHEBI:17499"/>
        <dbReference type="ChEBI" id="CHEBI:29950"/>
        <dbReference type="ChEBI" id="CHEBI:30616"/>
        <dbReference type="ChEBI" id="CHEBI:33019"/>
        <dbReference type="ChEBI" id="CHEBI:61963"/>
        <dbReference type="ChEBI" id="CHEBI:82748"/>
        <dbReference type="ChEBI" id="CHEBI:141453"/>
        <dbReference type="ChEBI" id="CHEBI:456215"/>
    </reaction>
    <physiologicalReaction direction="left-to-right" evidence="1">
        <dbReference type="Rhea" id="RHEA:57049"/>
    </physiologicalReaction>
</comment>
<comment type="cofactor">
    <cofactor evidence="1">
        <name>Mg(2+)</name>
        <dbReference type="ChEBI" id="CHEBI:18420"/>
    </cofactor>
</comment>
<comment type="cofactor">
    <cofactor evidence="1">
        <name>[4Fe-4S] cluster</name>
        <dbReference type="ChEBI" id="CHEBI:49883"/>
    </cofactor>
    <text evidence="1">Binds 1 [4Fe-4S] cluster per subunit. The cluster is chelated by three Cys residues, the fourth Fe has a free coordination site that may bind a sulfur atom transferred from the persulfide of IscS.</text>
</comment>
<comment type="pathway">
    <text evidence="1">tRNA modification.</text>
</comment>
<comment type="subunit">
    <text evidence="1">Homodimer.</text>
</comment>
<comment type="subcellular location">
    <subcellularLocation>
        <location evidence="1">Cytoplasm</location>
    </subcellularLocation>
</comment>
<comment type="miscellaneous">
    <text evidence="1">The thiolation reaction likely consists of two steps: a first activation step by ATP to form an adenylated intermediate of the target base of tRNA, and a second nucleophilic substitution step of the sulfur (S) atom supplied by the hydrosulfide attached to the Fe-S cluster.</text>
</comment>
<comment type="similarity">
    <text evidence="1">Belongs to the TtcA family.</text>
</comment>
<dbReference type="EC" id="2.8.1.-" evidence="1"/>
<dbReference type="EMBL" id="CP000569">
    <property type="protein sequence ID" value="ABN74069.1"/>
    <property type="molecule type" value="Genomic_DNA"/>
</dbReference>
<dbReference type="RefSeq" id="WP_005601354.1">
    <property type="nucleotide sequence ID" value="NC_009053.1"/>
</dbReference>
<dbReference type="SMR" id="A3N0Y3"/>
<dbReference type="STRING" id="416269.APL_0975"/>
<dbReference type="EnsemblBacteria" id="ABN74069">
    <property type="protein sequence ID" value="ABN74069"/>
    <property type="gene ID" value="APL_0975"/>
</dbReference>
<dbReference type="KEGG" id="apl:APL_0975"/>
<dbReference type="eggNOG" id="COG0037">
    <property type="taxonomic scope" value="Bacteria"/>
</dbReference>
<dbReference type="HOGENOM" id="CLU_026481_0_0_6"/>
<dbReference type="Proteomes" id="UP000001432">
    <property type="component" value="Chromosome"/>
</dbReference>
<dbReference type="GO" id="GO:0005737">
    <property type="term" value="C:cytoplasm"/>
    <property type="evidence" value="ECO:0007669"/>
    <property type="project" value="UniProtKB-SubCell"/>
</dbReference>
<dbReference type="GO" id="GO:0051539">
    <property type="term" value="F:4 iron, 4 sulfur cluster binding"/>
    <property type="evidence" value="ECO:0007669"/>
    <property type="project" value="UniProtKB-UniRule"/>
</dbReference>
<dbReference type="GO" id="GO:0005524">
    <property type="term" value="F:ATP binding"/>
    <property type="evidence" value="ECO:0007669"/>
    <property type="project" value="UniProtKB-UniRule"/>
</dbReference>
<dbReference type="GO" id="GO:0000287">
    <property type="term" value="F:magnesium ion binding"/>
    <property type="evidence" value="ECO:0007669"/>
    <property type="project" value="UniProtKB-UniRule"/>
</dbReference>
<dbReference type="GO" id="GO:0016783">
    <property type="term" value="F:sulfurtransferase activity"/>
    <property type="evidence" value="ECO:0007669"/>
    <property type="project" value="UniProtKB-UniRule"/>
</dbReference>
<dbReference type="GO" id="GO:0000049">
    <property type="term" value="F:tRNA binding"/>
    <property type="evidence" value="ECO:0007669"/>
    <property type="project" value="UniProtKB-KW"/>
</dbReference>
<dbReference type="GO" id="GO:0034227">
    <property type="term" value="P:tRNA thio-modification"/>
    <property type="evidence" value="ECO:0007669"/>
    <property type="project" value="UniProtKB-UniRule"/>
</dbReference>
<dbReference type="CDD" id="cd24138">
    <property type="entry name" value="TtcA-like"/>
    <property type="match status" value="1"/>
</dbReference>
<dbReference type="Gene3D" id="3.40.50.620">
    <property type="entry name" value="HUPs"/>
    <property type="match status" value="1"/>
</dbReference>
<dbReference type="HAMAP" id="MF_01850">
    <property type="entry name" value="TtcA"/>
    <property type="match status" value="1"/>
</dbReference>
<dbReference type="InterPro" id="IPR014729">
    <property type="entry name" value="Rossmann-like_a/b/a_fold"/>
</dbReference>
<dbReference type="InterPro" id="IPR011063">
    <property type="entry name" value="TilS/TtcA_N"/>
</dbReference>
<dbReference type="InterPro" id="IPR012089">
    <property type="entry name" value="tRNA_Cyd_32_2_STrfase"/>
</dbReference>
<dbReference type="InterPro" id="IPR035107">
    <property type="entry name" value="tRNA_thiolation_TtcA_Ctu1"/>
</dbReference>
<dbReference type="NCBIfam" id="NF007972">
    <property type="entry name" value="PRK10696.1"/>
    <property type="match status" value="1"/>
</dbReference>
<dbReference type="PANTHER" id="PTHR43686:SF1">
    <property type="entry name" value="AMINOTRAN_5 DOMAIN-CONTAINING PROTEIN"/>
    <property type="match status" value="1"/>
</dbReference>
<dbReference type="PANTHER" id="PTHR43686">
    <property type="entry name" value="SULFURTRANSFERASE-RELATED"/>
    <property type="match status" value="1"/>
</dbReference>
<dbReference type="Pfam" id="PF01171">
    <property type="entry name" value="ATP_bind_3"/>
    <property type="match status" value="1"/>
</dbReference>
<dbReference type="PIRSF" id="PIRSF004976">
    <property type="entry name" value="ATPase_YdaO"/>
    <property type="match status" value="1"/>
</dbReference>
<dbReference type="SUPFAM" id="SSF52402">
    <property type="entry name" value="Adenine nucleotide alpha hydrolases-like"/>
    <property type="match status" value="1"/>
</dbReference>
<name>TTCA_ACTP2</name>
<organism>
    <name type="scientific">Actinobacillus pleuropneumoniae serotype 5b (strain L20)</name>
    <dbReference type="NCBI Taxonomy" id="416269"/>
    <lineage>
        <taxon>Bacteria</taxon>
        <taxon>Pseudomonadati</taxon>
        <taxon>Pseudomonadota</taxon>
        <taxon>Gammaproteobacteria</taxon>
        <taxon>Pasteurellales</taxon>
        <taxon>Pasteurellaceae</taxon>
        <taxon>Actinobacillus</taxon>
    </lineage>
</organism>
<gene>
    <name evidence="1" type="primary">ttcA</name>
    <name type="ordered locus">APL_0975</name>
</gene>
<evidence type="ECO:0000255" key="1">
    <source>
        <dbReference type="HAMAP-Rule" id="MF_01850"/>
    </source>
</evidence>
<reference key="1">
    <citation type="journal article" date="2008" name="J. Bacteriol.">
        <title>The complete genome sequence of Actinobacillus pleuropneumoniae L20 (serotype 5b).</title>
        <authorList>
            <person name="Foote S.J."/>
            <person name="Bosse J.T."/>
            <person name="Bouevitch A.B."/>
            <person name="Langford P.R."/>
            <person name="Young N.M."/>
            <person name="Nash J.H.E."/>
        </authorList>
    </citation>
    <scope>NUCLEOTIDE SEQUENCE [LARGE SCALE GENOMIC DNA]</scope>
    <source>
        <strain>L20</strain>
    </source>
</reference>
<accession>A3N0Y3</accession>
<protein>
    <recommendedName>
        <fullName evidence="1">tRNA-cytidine(32) 2-sulfurtransferase</fullName>
        <ecNumber evidence="1">2.8.1.-</ecNumber>
    </recommendedName>
    <alternativeName>
        <fullName evidence="1">Two-thiocytidine biosynthesis protein A</fullName>
    </alternativeName>
    <alternativeName>
        <fullName evidence="1">tRNA 2-thiocytidine biosynthesis protein TtcA</fullName>
    </alternativeName>
</protein>
<sequence length="318" mass="36145">MNQDTQSANTQQEKKIAYNFNKLQKRLRRNVGNAIADFNMIEDGDKVMVCLSGGKDSYTLLDILLNLKLSAPIHFDIVAVNLDQKQPGFPEHILPEYLESIGVEYKIVEENTYGIVKEKIPEGKTTCSLCSRLRRGILYRTATELGATKIALGHHRDDMLETLFLNMFYGGKLKSMPPKLISDDGKQIVIRPLAYCKEKDIEKYSQAKQFPIIPCNLCGSQPNLQRQVVKEMLQTWDRQYPGRIETMFSAMQNITLSHLCDPSLFDFKGLKRGQVLDGVEGDIAFDKAEIPNQPLIQDEDEQTTDYGENGMIQFKQVQ</sequence>
<proteinExistence type="inferred from homology"/>
<keyword id="KW-0004">4Fe-4S</keyword>
<keyword id="KW-0067">ATP-binding</keyword>
<keyword id="KW-0963">Cytoplasm</keyword>
<keyword id="KW-0408">Iron</keyword>
<keyword id="KW-0411">Iron-sulfur</keyword>
<keyword id="KW-0460">Magnesium</keyword>
<keyword id="KW-0479">Metal-binding</keyword>
<keyword id="KW-0547">Nucleotide-binding</keyword>
<keyword id="KW-1185">Reference proteome</keyword>
<keyword id="KW-0694">RNA-binding</keyword>
<keyword id="KW-0808">Transferase</keyword>
<keyword id="KW-0819">tRNA processing</keyword>
<keyword id="KW-0820">tRNA-binding</keyword>
<feature type="chain" id="PRO_0000348652" description="tRNA-cytidine(32) 2-sulfurtransferase">
    <location>
        <begin position="1"/>
        <end position="318"/>
    </location>
</feature>
<feature type="short sequence motif" description="PP-loop motif" evidence="1">
    <location>
        <begin position="52"/>
        <end position="57"/>
    </location>
</feature>
<feature type="binding site" evidence="1">
    <location>
        <position position="127"/>
    </location>
    <ligand>
        <name>[4Fe-4S] cluster</name>
        <dbReference type="ChEBI" id="CHEBI:49883"/>
    </ligand>
</feature>
<feature type="binding site" evidence="1">
    <location>
        <position position="130"/>
    </location>
    <ligand>
        <name>[4Fe-4S] cluster</name>
        <dbReference type="ChEBI" id="CHEBI:49883"/>
    </ligand>
</feature>
<feature type="binding site" evidence="1">
    <location>
        <position position="218"/>
    </location>
    <ligand>
        <name>[4Fe-4S] cluster</name>
        <dbReference type="ChEBI" id="CHEBI:49883"/>
    </ligand>
</feature>